<keyword id="KW-0067">ATP-binding</keyword>
<keyword id="KW-0238">DNA-binding</keyword>
<keyword id="KW-0479">Metal-binding</keyword>
<keyword id="KW-0547">Nucleotide-binding</keyword>
<keyword id="KW-1185">Reference proteome</keyword>
<keyword id="KW-0678">Repressor</keyword>
<keyword id="KW-0804">Transcription</keyword>
<keyword id="KW-0805">Transcription regulation</keyword>
<keyword id="KW-0862">Zinc</keyword>
<keyword id="KW-0863">Zinc-finger</keyword>
<feature type="chain" id="PRO_1000191765" description="Transcriptional repressor NrdR">
    <location>
        <begin position="1"/>
        <end position="168"/>
    </location>
</feature>
<feature type="domain" description="ATP-cone" evidence="1">
    <location>
        <begin position="49"/>
        <end position="139"/>
    </location>
</feature>
<feature type="zinc finger region" evidence="1">
    <location>
        <begin position="3"/>
        <end position="34"/>
    </location>
</feature>
<proteinExistence type="inferred from homology"/>
<gene>
    <name evidence="1" type="primary">nrdR</name>
    <name type="ordered locus">ACP_1461</name>
</gene>
<organism>
    <name type="scientific">Acidobacterium capsulatum (strain ATCC 51196 / DSM 11244 / BCRC 80197 / JCM 7670 / NBRC 15755 / NCIMB 13165 / 161)</name>
    <dbReference type="NCBI Taxonomy" id="240015"/>
    <lineage>
        <taxon>Bacteria</taxon>
        <taxon>Pseudomonadati</taxon>
        <taxon>Acidobacteriota</taxon>
        <taxon>Terriglobia</taxon>
        <taxon>Terriglobales</taxon>
        <taxon>Acidobacteriaceae</taxon>
        <taxon>Acidobacterium</taxon>
    </lineage>
</organism>
<dbReference type="EMBL" id="CP001472">
    <property type="protein sequence ID" value="ACO33926.1"/>
    <property type="molecule type" value="Genomic_DNA"/>
</dbReference>
<dbReference type="RefSeq" id="WP_015896594.1">
    <property type="nucleotide sequence ID" value="NC_012483.1"/>
</dbReference>
<dbReference type="SMR" id="C1F652"/>
<dbReference type="FunCoup" id="C1F652">
    <property type="interactions" value="239"/>
</dbReference>
<dbReference type="STRING" id="240015.ACP_1461"/>
<dbReference type="KEGG" id="aca:ACP_1461"/>
<dbReference type="eggNOG" id="COG1327">
    <property type="taxonomic scope" value="Bacteria"/>
</dbReference>
<dbReference type="HOGENOM" id="CLU_108412_0_0_0"/>
<dbReference type="InParanoid" id="C1F652"/>
<dbReference type="OrthoDB" id="9807461at2"/>
<dbReference type="Proteomes" id="UP000002207">
    <property type="component" value="Chromosome"/>
</dbReference>
<dbReference type="GO" id="GO:0005524">
    <property type="term" value="F:ATP binding"/>
    <property type="evidence" value="ECO:0007669"/>
    <property type="project" value="UniProtKB-KW"/>
</dbReference>
<dbReference type="GO" id="GO:0003677">
    <property type="term" value="F:DNA binding"/>
    <property type="evidence" value="ECO:0007669"/>
    <property type="project" value="UniProtKB-KW"/>
</dbReference>
<dbReference type="GO" id="GO:0008270">
    <property type="term" value="F:zinc ion binding"/>
    <property type="evidence" value="ECO:0007669"/>
    <property type="project" value="UniProtKB-UniRule"/>
</dbReference>
<dbReference type="GO" id="GO:0045892">
    <property type="term" value="P:negative regulation of DNA-templated transcription"/>
    <property type="evidence" value="ECO:0007669"/>
    <property type="project" value="UniProtKB-UniRule"/>
</dbReference>
<dbReference type="HAMAP" id="MF_00440">
    <property type="entry name" value="NrdR"/>
    <property type="match status" value="1"/>
</dbReference>
<dbReference type="InterPro" id="IPR005144">
    <property type="entry name" value="ATP-cone_dom"/>
</dbReference>
<dbReference type="InterPro" id="IPR055173">
    <property type="entry name" value="NrdR-like_N"/>
</dbReference>
<dbReference type="InterPro" id="IPR003796">
    <property type="entry name" value="RNR_NrdR-like"/>
</dbReference>
<dbReference type="NCBIfam" id="TIGR00244">
    <property type="entry name" value="transcriptional regulator NrdR"/>
    <property type="match status" value="1"/>
</dbReference>
<dbReference type="PANTHER" id="PTHR30455">
    <property type="entry name" value="TRANSCRIPTIONAL REPRESSOR NRDR"/>
    <property type="match status" value="1"/>
</dbReference>
<dbReference type="PANTHER" id="PTHR30455:SF2">
    <property type="entry name" value="TRANSCRIPTIONAL REPRESSOR NRDR"/>
    <property type="match status" value="1"/>
</dbReference>
<dbReference type="Pfam" id="PF03477">
    <property type="entry name" value="ATP-cone"/>
    <property type="match status" value="1"/>
</dbReference>
<dbReference type="Pfam" id="PF22811">
    <property type="entry name" value="Zn_ribbon_NrdR"/>
    <property type="match status" value="1"/>
</dbReference>
<dbReference type="PROSITE" id="PS51161">
    <property type="entry name" value="ATP_CONE"/>
    <property type="match status" value="1"/>
</dbReference>
<reference key="1">
    <citation type="journal article" date="2009" name="Appl. Environ. Microbiol.">
        <title>Three genomes from the phylum Acidobacteria provide insight into the lifestyles of these microorganisms in soils.</title>
        <authorList>
            <person name="Ward N.L."/>
            <person name="Challacombe J.F."/>
            <person name="Janssen P.H."/>
            <person name="Henrissat B."/>
            <person name="Coutinho P.M."/>
            <person name="Wu M."/>
            <person name="Xie G."/>
            <person name="Haft D.H."/>
            <person name="Sait M."/>
            <person name="Badger J."/>
            <person name="Barabote R.D."/>
            <person name="Bradley B."/>
            <person name="Brettin T.S."/>
            <person name="Brinkac L.M."/>
            <person name="Bruce D."/>
            <person name="Creasy T."/>
            <person name="Daugherty S.C."/>
            <person name="Davidsen T.M."/>
            <person name="DeBoy R.T."/>
            <person name="Detter J.C."/>
            <person name="Dodson R.J."/>
            <person name="Durkin A.S."/>
            <person name="Ganapathy A."/>
            <person name="Gwinn-Giglio M."/>
            <person name="Han C.S."/>
            <person name="Khouri H."/>
            <person name="Kiss H."/>
            <person name="Kothari S.P."/>
            <person name="Madupu R."/>
            <person name="Nelson K.E."/>
            <person name="Nelson W.C."/>
            <person name="Paulsen I."/>
            <person name="Penn K."/>
            <person name="Ren Q."/>
            <person name="Rosovitz M.J."/>
            <person name="Selengut J.D."/>
            <person name="Shrivastava S."/>
            <person name="Sullivan S.A."/>
            <person name="Tapia R."/>
            <person name="Thompson L.S."/>
            <person name="Watkins K.L."/>
            <person name="Yang Q."/>
            <person name="Yu C."/>
            <person name="Zafar N."/>
            <person name="Zhou L."/>
            <person name="Kuske C.R."/>
        </authorList>
    </citation>
    <scope>NUCLEOTIDE SEQUENCE [LARGE SCALE GENOMIC DNA]</scope>
    <source>
        <strain>ATCC 51196 / DSM 11244 / BCRC 80197 / JCM 7670 / NBRC 15755 / NCIMB 13165 / 161</strain>
    </source>
</reference>
<evidence type="ECO:0000255" key="1">
    <source>
        <dbReference type="HAMAP-Rule" id="MF_00440"/>
    </source>
</evidence>
<comment type="function">
    <text evidence="1">Negatively regulates transcription of bacterial ribonucleotide reductase nrd genes and operons by binding to NrdR-boxes.</text>
</comment>
<comment type="cofactor">
    <cofactor evidence="1">
        <name>Zn(2+)</name>
        <dbReference type="ChEBI" id="CHEBI:29105"/>
    </cofactor>
    <text evidence="1">Binds 1 zinc ion.</text>
</comment>
<comment type="similarity">
    <text evidence="1">Belongs to the NrdR family.</text>
</comment>
<sequence>MKCPYCGFAQDRVVDSRESKEADSIRRRRECERCNKRFTTYERIDEIPYMVVKKDGRREKFDRHKVLSGLLRACEKRPISATKLENLVDETEAYLMDSAERERSTTEIGLLLMEKLKQLDTVSYIRFASVYRDFKDVNEFKEELEQLLTSKEPLSRRRTGKAGSAQDE</sequence>
<protein>
    <recommendedName>
        <fullName evidence="1">Transcriptional repressor NrdR</fullName>
    </recommendedName>
</protein>
<name>NRDR_ACIC5</name>
<accession>C1F652</accession>